<proteinExistence type="inferred from homology"/>
<accession>Q6EYH8</accession>
<geneLocation type="chloroplast"/>
<feature type="chain" id="PRO_0000207906" description="Protein PsbN">
    <location>
        <begin position="1"/>
        <end position="43"/>
    </location>
</feature>
<feature type="transmembrane region" description="Helical" evidence="1">
    <location>
        <begin position="5"/>
        <end position="27"/>
    </location>
</feature>
<name>PSBN_HOUCO</name>
<evidence type="ECO:0000255" key="1">
    <source>
        <dbReference type="HAMAP-Rule" id="MF_00293"/>
    </source>
</evidence>
<comment type="function">
    <text evidence="1">May play a role in photosystem I and II biogenesis.</text>
</comment>
<comment type="subcellular location">
    <subcellularLocation>
        <location evidence="1">Plastid</location>
        <location evidence="1">Chloroplast thylakoid membrane</location>
        <topology evidence="1">Single-pass membrane protein</topology>
    </subcellularLocation>
</comment>
<comment type="similarity">
    <text evidence="1">Belongs to the PsbN family.</text>
</comment>
<comment type="caution">
    <text evidence="1">Originally thought to be a component of PSII; based on experiments in Synechocystis, N.tabacum and barley, and its absence from PSII in T.elongatus and T.vulcanus, this is probably not true.</text>
</comment>
<keyword id="KW-0150">Chloroplast</keyword>
<keyword id="KW-0472">Membrane</keyword>
<keyword id="KW-0934">Plastid</keyword>
<keyword id="KW-0793">Thylakoid</keyword>
<keyword id="KW-0812">Transmembrane</keyword>
<keyword id="KW-1133">Transmembrane helix</keyword>
<sequence length="43" mass="4663">METATLVAISISGLLVSFTGYALYTAFGQPSEQLRDPFEEHGD</sequence>
<dbReference type="EMBL" id="AF528902">
    <property type="protein sequence ID" value="AAQ09395.1"/>
    <property type="molecule type" value="Genomic_DNA"/>
</dbReference>
<dbReference type="RefSeq" id="YP_009774313.1">
    <property type="nucleotide sequence ID" value="NC_047437.1"/>
</dbReference>
<dbReference type="SMR" id="Q6EYH8"/>
<dbReference type="GeneID" id="54615897"/>
<dbReference type="GO" id="GO:0009535">
    <property type="term" value="C:chloroplast thylakoid membrane"/>
    <property type="evidence" value="ECO:0007669"/>
    <property type="project" value="UniProtKB-SubCell"/>
</dbReference>
<dbReference type="GO" id="GO:0015979">
    <property type="term" value="P:photosynthesis"/>
    <property type="evidence" value="ECO:0007669"/>
    <property type="project" value="InterPro"/>
</dbReference>
<dbReference type="HAMAP" id="MF_00293">
    <property type="entry name" value="PSII_PsbN"/>
    <property type="match status" value="1"/>
</dbReference>
<dbReference type="InterPro" id="IPR003398">
    <property type="entry name" value="PSII_PsbN"/>
</dbReference>
<dbReference type="PANTHER" id="PTHR35326">
    <property type="entry name" value="PROTEIN PSBN"/>
    <property type="match status" value="1"/>
</dbReference>
<dbReference type="PANTHER" id="PTHR35326:SF3">
    <property type="entry name" value="PROTEIN PSBN"/>
    <property type="match status" value="1"/>
</dbReference>
<dbReference type="Pfam" id="PF02468">
    <property type="entry name" value="PsbN"/>
    <property type="match status" value="1"/>
</dbReference>
<organism>
    <name type="scientific">Houttuynia cordata</name>
    <name type="common">Chameleon plant</name>
    <dbReference type="NCBI Taxonomy" id="16752"/>
    <lineage>
        <taxon>Eukaryota</taxon>
        <taxon>Viridiplantae</taxon>
        <taxon>Streptophyta</taxon>
        <taxon>Embryophyta</taxon>
        <taxon>Tracheophyta</taxon>
        <taxon>Spermatophyta</taxon>
        <taxon>Magnoliopsida</taxon>
        <taxon>Magnoliidae</taxon>
        <taxon>Piperales</taxon>
        <taxon>Saururaceae</taxon>
        <taxon>Houttuynia</taxon>
    </lineage>
</organism>
<gene>
    <name evidence="1" type="primary">psbN</name>
</gene>
<protein>
    <recommendedName>
        <fullName evidence="1">Protein PsbN</fullName>
    </recommendedName>
</protein>
<reference key="1">
    <citation type="submission" date="2002-07" db="EMBL/GenBank/DDBJ databases">
        <title>Parsing out signal and noise for seed-plant phylogenetic inference.</title>
        <authorList>
            <person name="Graham S.W."/>
            <person name="Rai H.S."/>
            <person name="Ikegami K."/>
            <person name="Reeves P.A."/>
            <person name="Olmstead R.G."/>
        </authorList>
    </citation>
    <scope>NUCLEOTIDE SEQUENCE [GENOMIC DNA]</scope>
</reference>